<feature type="chain" id="PRO_0000396504" description="Forkhead box protein O">
    <location>
        <begin position="1"/>
        <end position="600"/>
    </location>
</feature>
<feature type="DNA-binding region" description="Fork-head" evidence="3">
    <location>
        <begin position="100"/>
        <end position="206"/>
    </location>
</feature>
<feature type="region of interest" description="Disordered" evidence="4">
    <location>
        <begin position="187"/>
        <end position="210"/>
    </location>
</feature>
<feature type="region of interest" description="Disordered" evidence="4">
    <location>
        <begin position="222"/>
        <end position="283"/>
    </location>
</feature>
<feature type="region of interest" description="Disordered" evidence="4">
    <location>
        <begin position="319"/>
        <end position="364"/>
    </location>
</feature>
<feature type="region of interest" description="Disordered" evidence="4">
    <location>
        <begin position="580"/>
        <end position="600"/>
    </location>
</feature>
<feature type="compositionally biased region" description="Polar residues" evidence="4">
    <location>
        <begin position="226"/>
        <end position="235"/>
    </location>
</feature>
<feature type="compositionally biased region" description="Polar residues" evidence="4">
    <location>
        <begin position="261"/>
        <end position="270"/>
    </location>
</feature>
<feature type="compositionally biased region" description="Pro residues" evidence="4">
    <location>
        <begin position="330"/>
        <end position="342"/>
    </location>
</feature>
<feature type="compositionally biased region" description="Low complexity" evidence="4">
    <location>
        <begin position="343"/>
        <end position="354"/>
    </location>
</feature>
<feature type="modified residue" description="Phosphothreonine; by PKB/AKT1" evidence="2">
    <location>
        <position position="49"/>
    </location>
</feature>
<feature type="modified residue" description="Phosphoserine" evidence="2">
    <location>
        <position position="80"/>
    </location>
</feature>
<feature type="modified residue" description="Phosphoserine; by PKB/AKT1" evidence="2">
    <location>
        <position position="195"/>
    </location>
</feature>
<feature type="modified residue" description="Phosphoserine; by PKB/AKT1" evidence="2">
    <location>
        <position position="264"/>
    </location>
</feature>
<feature type="modified residue" description="Phosphoserine" evidence="2">
    <location>
        <position position="267"/>
    </location>
</feature>
<feature type="modified residue" description="Phosphoserine" evidence="2">
    <location>
        <position position="268"/>
    </location>
</feature>
<feature type="modified residue" description="Phosphoserine" evidence="2">
    <location>
        <position position="273"/>
    </location>
</feature>
<keyword id="KW-0010">Activator</keyword>
<keyword id="KW-0131">Cell cycle</keyword>
<keyword id="KW-0963">Cytoplasm</keyword>
<keyword id="KW-0217">Developmental protein</keyword>
<keyword id="KW-0221">Differentiation</keyword>
<keyword id="KW-0238">DNA-binding</keyword>
<keyword id="KW-0341">Growth regulation</keyword>
<keyword id="KW-0539">Nucleus</keyword>
<keyword id="KW-0597">Phosphoprotein</keyword>
<keyword id="KW-1185">Reference proteome</keyword>
<keyword id="KW-0804">Transcription</keyword>
<keyword id="KW-0805">Transcription regulation</keyword>
<organism>
    <name type="scientific">Drosophila ananassae</name>
    <name type="common">Fruit fly</name>
    <dbReference type="NCBI Taxonomy" id="7217"/>
    <lineage>
        <taxon>Eukaryota</taxon>
        <taxon>Metazoa</taxon>
        <taxon>Ecdysozoa</taxon>
        <taxon>Arthropoda</taxon>
        <taxon>Hexapoda</taxon>
        <taxon>Insecta</taxon>
        <taxon>Pterygota</taxon>
        <taxon>Neoptera</taxon>
        <taxon>Endopterygota</taxon>
        <taxon>Diptera</taxon>
        <taxon>Brachycera</taxon>
        <taxon>Muscomorpha</taxon>
        <taxon>Ephydroidea</taxon>
        <taxon>Drosophilidae</taxon>
        <taxon>Drosophila</taxon>
        <taxon>Sophophora</taxon>
    </lineage>
</organism>
<dbReference type="EMBL" id="CH902617">
    <property type="protein sequence ID" value="EDV44041.1"/>
    <property type="status" value="ALT_SEQ"/>
    <property type="molecule type" value="Genomic_DNA"/>
</dbReference>
<dbReference type="RefSeq" id="XP_001955480.2">
    <property type="nucleotide sequence ID" value="XM_001955444.2"/>
</dbReference>
<dbReference type="SMR" id="B3LYS5"/>
<dbReference type="FunCoup" id="B3LYS5">
    <property type="interactions" value="336"/>
</dbReference>
<dbReference type="STRING" id="7217.B3LYS5"/>
<dbReference type="eggNOG" id="KOG2294">
    <property type="taxonomic scope" value="Eukaryota"/>
</dbReference>
<dbReference type="InParanoid" id="B3LYS5"/>
<dbReference type="OrthoDB" id="5954824at2759"/>
<dbReference type="ChiTaRS" id="foxo">
    <property type="organism name" value="fly"/>
</dbReference>
<dbReference type="Proteomes" id="UP000007801">
    <property type="component" value="Unassembled WGS sequence"/>
</dbReference>
<dbReference type="GO" id="GO:0005737">
    <property type="term" value="C:cytoplasm"/>
    <property type="evidence" value="ECO:0000250"/>
    <property type="project" value="UniProtKB"/>
</dbReference>
<dbReference type="GO" id="GO:0005634">
    <property type="term" value="C:nucleus"/>
    <property type="evidence" value="ECO:0000250"/>
    <property type="project" value="UniProtKB"/>
</dbReference>
<dbReference type="GO" id="GO:0003700">
    <property type="term" value="F:DNA-binding transcription factor activity"/>
    <property type="evidence" value="ECO:0000250"/>
    <property type="project" value="UniProtKB"/>
</dbReference>
<dbReference type="GO" id="GO:0000981">
    <property type="term" value="F:DNA-binding transcription factor activity, RNA polymerase II-specific"/>
    <property type="evidence" value="ECO:0007669"/>
    <property type="project" value="TreeGrafter"/>
</dbReference>
<dbReference type="GO" id="GO:0000978">
    <property type="term" value="F:RNA polymerase II cis-regulatory region sequence-specific DNA binding"/>
    <property type="evidence" value="ECO:0007669"/>
    <property type="project" value="TreeGrafter"/>
</dbReference>
<dbReference type="GO" id="GO:0030154">
    <property type="term" value="P:cell differentiation"/>
    <property type="evidence" value="ECO:0007669"/>
    <property type="project" value="UniProtKB-KW"/>
</dbReference>
<dbReference type="GO" id="GO:0042593">
    <property type="term" value="P:glucose homeostasis"/>
    <property type="evidence" value="ECO:0000250"/>
    <property type="project" value="UniProtKB"/>
</dbReference>
<dbReference type="GO" id="GO:0030308">
    <property type="term" value="P:negative regulation of cell growth"/>
    <property type="evidence" value="ECO:0000250"/>
    <property type="project" value="UniProtKB"/>
</dbReference>
<dbReference type="GO" id="GO:0008285">
    <property type="term" value="P:negative regulation of cell population proliferation"/>
    <property type="evidence" value="ECO:0000250"/>
    <property type="project" value="UniProtKB"/>
</dbReference>
<dbReference type="GO" id="GO:0046627">
    <property type="term" value="P:negative regulation of insulin receptor signaling pathway"/>
    <property type="evidence" value="ECO:0000250"/>
    <property type="project" value="UniProtKB"/>
</dbReference>
<dbReference type="GO" id="GO:0006355">
    <property type="term" value="P:regulation of DNA-templated transcription"/>
    <property type="evidence" value="ECO:0000250"/>
    <property type="project" value="UniProtKB"/>
</dbReference>
<dbReference type="GO" id="GO:0019216">
    <property type="term" value="P:regulation of lipid metabolic process"/>
    <property type="evidence" value="ECO:0000250"/>
    <property type="project" value="UniProtKB"/>
</dbReference>
<dbReference type="CDD" id="cd20032">
    <property type="entry name" value="FH_FOXO"/>
    <property type="match status" value="1"/>
</dbReference>
<dbReference type="FunFam" id="1.10.10.10:FF:000032">
    <property type="entry name" value="Forkhead box protein O4"/>
    <property type="match status" value="1"/>
</dbReference>
<dbReference type="Gene3D" id="1.10.10.10">
    <property type="entry name" value="Winged helix-like DNA-binding domain superfamily/Winged helix DNA-binding domain"/>
    <property type="match status" value="1"/>
</dbReference>
<dbReference type="InterPro" id="IPR001766">
    <property type="entry name" value="Fork_head_dom"/>
</dbReference>
<dbReference type="InterPro" id="IPR030456">
    <property type="entry name" value="TF_fork_head_CS_2"/>
</dbReference>
<dbReference type="InterPro" id="IPR036388">
    <property type="entry name" value="WH-like_DNA-bd_sf"/>
</dbReference>
<dbReference type="InterPro" id="IPR036390">
    <property type="entry name" value="WH_DNA-bd_sf"/>
</dbReference>
<dbReference type="PANTHER" id="PTHR45767">
    <property type="entry name" value="FORKHEAD BOX PROTEIN O"/>
    <property type="match status" value="1"/>
</dbReference>
<dbReference type="PANTHER" id="PTHR45767:SF2">
    <property type="entry name" value="FORKHEAD BOX PROTEIN O"/>
    <property type="match status" value="1"/>
</dbReference>
<dbReference type="Pfam" id="PF00250">
    <property type="entry name" value="Forkhead"/>
    <property type="match status" value="1"/>
</dbReference>
<dbReference type="PRINTS" id="PR00053">
    <property type="entry name" value="FORKHEAD"/>
</dbReference>
<dbReference type="SMART" id="SM00339">
    <property type="entry name" value="FH"/>
    <property type="match status" value="1"/>
</dbReference>
<dbReference type="SUPFAM" id="SSF46785">
    <property type="entry name" value="Winged helix' DNA-binding domain"/>
    <property type="match status" value="1"/>
</dbReference>
<dbReference type="PROSITE" id="PS00658">
    <property type="entry name" value="FORK_HEAD_2"/>
    <property type="match status" value="1"/>
</dbReference>
<dbReference type="PROSITE" id="PS50039">
    <property type="entry name" value="FORK_HEAD_3"/>
    <property type="match status" value="1"/>
</dbReference>
<gene>
    <name evidence="2" type="primary">foxo</name>
    <name type="ORF">GF16233</name>
</gene>
<sequence>MMDGFAQDWPTLTHTDNGLAMDQLGVGVGVGDLPIDAGFEPQTRARSNTWPCPRPDNFVEPVDELDSTKASNQQLAPGDSQQAIQNANAAKKNSSRRNAWGNLSYADLITHAIGSATDKRLTLSQIYEWMVQNVPYFKDKGDSNSSAGWKNSIRHNLSLHNRFMRVQNEGTGKSSWWMLNPEAKPGKSVRRRAASMETSRYEKRRGRAKKRVEALRQAGVVGLNDATPSPSSSVSEGLDHFPESPLHSGGGFQLSPDFRQRASSNASSCGRLSPIRAQDLEPDWGFPGVDYQNTTMTQALEELTGSMADELTLCTQQQQQGFSAASGLPTQPPPPPYQPPQPQQQQQQGQQPSPYALNGPTPGYNTLQPQSQCLLHRSLNCSCLHNARDGLSPNSVTTTMSPAYPNSEPSSDSLNTYSNVVLDGPADTAALLVQQQQQLATNLEGQCLEVLNSEAQPIDEFNLENFPVGNLECNVEELLQQEMSYGGLLDINIPLASVNTNLVNSGAPISNITTSTGTSLNLNQLQAQLHQQQQQQQQLQQQQQQQQHQQHQQQQLLLNNNNNTSSSSLELATQTPSTNLNARVQYSQPSVVTSPPSWVH</sequence>
<accession>B3LYS5</accession>
<protein>
    <recommendedName>
        <fullName evidence="2">Forkhead box protein O</fullName>
    </recommendedName>
</protein>
<reference evidence="6" key="1">
    <citation type="journal article" date="2007" name="Nature">
        <title>Evolution of genes and genomes on the Drosophila phylogeny.</title>
        <authorList>
            <consortium name="Drosophila 12 genomes consortium"/>
        </authorList>
    </citation>
    <scope>NUCLEOTIDE SEQUENCE [LARGE SCALE GENOMIC DNA]</scope>
    <source>
        <strain evidence="6">Tucson 14024-0371.13</strain>
    </source>
</reference>
<name>FOXO_DROAN</name>
<comment type="function">
    <text evidence="1">Transcription factor involved in the regulation of the insulin signaling pathway. Consistently activates both the downstream target Thor\d4EBP and the feedback control target InR. Involved in negative regulation of the cell cycle, modulating cell growth and proliferation. In response to cellular stresses, such as nutrient deprivation or increased levels of reactive oxygen species, foxo is activated and inhibits growth through the action of target genes such as Thor. Foxo activated in the adult fat body can regulate lifespan in adults; an insulin peptide itself may function as one secondary messenger of insulin-regulated aging. Also regulates Lip4, homolog of human acid lipases, thereby acting as a key modulator of lipid metabolism by insulin signaling and integrates insulin responses to glucose and lipid homeostasis (By similarity).</text>
</comment>
<comment type="subunit">
    <text evidence="2">Interacts with melt.</text>
</comment>
<comment type="subcellular location">
    <subcellularLocation>
        <location evidence="2">Cytoplasm</location>
    </subcellularLocation>
    <subcellularLocation>
        <location evidence="2 3">Nucleus</location>
    </subcellularLocation>
    <text evidence="2">When phosphorylated, translocated from nucleus to cytoplasm. Dephosphorylation triggers nuclear translocation (By similarity).</text>
</comment>
<comment type="sequence caution" evidence="5">
    <conflict type="erroneous gene model prediction">
        <sequence resource="EMBL-CDS" id="EDV44041"/>
    </conflict>
</comment>
<proteinExistence type="inferred from homology"/>
<evidence type="ECO:0000250" key="1"/>
<evidence type="ECO:0000250" key="2">
    <source>
        <dbReference type="UniProtKB" id="Q95V55"/>
    </source>
</evidence>
<evidence type="ECO:0000255" key="3">
    <source>
        <dbReference type="PROSITE-ProRule" id="PRU00089"/>
    </source>
</evidence>
<evidence type="ECO:0000256" key="4">
    <source>
        <dbReference type="SAM" id="MobiDB-lite"/>
    </source>
</evidence>
<evidence type="ECO:0000305" key="5"/>
<evidence type="ECO:0000312" key="6">
    <source>
        <dbReference type="EMBL" id="EDV44041.1"/>
    </source>
</evidence>